<name>ARLY_STRPI</name>
<gene>
    <name evidence="1" type="primary">argH</name>
    <name type="ordered locus">SPH_0216</name>
</gene>
<comment type="catalytic activity">
    <reaction evidence="1">
        <text>2-(N(omega)-L-arginino)succinate = fumarate + L-arginine</text>
        <dbReference type="Rhea" id="RHEA:24020"/>
        <dbReference type="ChEBI" id="CHEBI:29806"/>
        <dbReference type="ChEBI" id="CHEBI:32682"/>
        <dbReference type="ChEBI" id="CHEBI:57472"/>
        <dbReference type="EC" id="4.3.2.1"/>
    </reaction>
</comment>
<comment type="pathway">
    <text evidence="1">Amino-acid biosynthesis; L-arginine biosynthesis; L-arginine from L-ornithine and carbamoyl phosphate: step 3/3.</text>
</comment>
<comment type="subcellular location">
    <subcellularLocation>
        <location evidence="1">Cytoplasm</location>
    </subcellularLocation>
</comment>
<comment type="similarity">
    <text evidence="1">Belongs to the lyase 1 family. Argininosuccinate lyase subfamily.</text>
</comment>
<protein>
    <recommendedName>
        <fullName evidence="1">Argininosuccinate lyase</fullName>
        <shortName evidence="1">ASAL</shortName>
        <ecNumber evidence="1">4.3.2.1</ecNumber>
    </recommendedName>
    <alternativeName>
        <fullName evidence="1">Arginosuccinase</fullName>
    </alternativeName>
</protein>
<proteinExistence type="inferred from homology"/>
<dbReference type="EC" id="4.3.2.1" evidence="1"/>
<dbReference type="EMBL" id="CP000936">
    <property type="protein sequence ID" value="ACA35784.1"/>
    <property type="molecule type" value="Genomic_DNA"/>
</dbReference>
<dbReference type="RefSeq" id="WP_001107614.1">
    <property type="nucleotide sequence ID" value="NC_010380.1"/>
</dbReference>
<dbReference type="SMR" id="B1I815"/>
<dbReference type="KEGG" id="spv:SPH_0216"/>
<dbReference type="HOGENOM" id="CLU_027272_2_3_9"/>
<dbReference type="UniPathway" id="UPA00068">
    <property type="reaction ID" value="UER00114"/>
</dbReference>
<dbReference type="Proteomes" id="UP000002163">
    <property type="component" value="Chromosome"/>
</dbReference>
<dbReference type="GO" id="GO:0005829">
    <property type="term" value="C:cytosol"/>
    <property type="evidence" value="ECO:0007669"/>
    <property type="project" value="TreeGrafter"/>
</dbReference>
<dbReference type="GO" id="GO:0004056">
    <property type="term" value="F:argininosuccinate lyase activity"/>
    <property type="evidence" value="ECO:0007669"/>
    <property type="project" value="UniProtKB-UniRule"/>
</dbReference>
<dbReference type="GO" id="GO:0042450">
    <property type="term" value="P:arginine biosynthetic process via ornithine"/>
    <property type="evidence" value="ECO:0007669"/>
    <property type="project" value="InterPro"/>
</dbReference>
<dbReference type="GO" id="GO:0006526">
    <property type="term" value="P:L-arginine biosynthetic process"/>
    <property type="evidence" value="ECO:0007669"/>
    <property type="project" value="UniProtKB-UniRule"/>
</dbReference>
<dbReference type="CDD" id="cd01359">
    <property type="entry name" value="Argininosuccinate_lyase"/>
    <property type="match status" value="1"/>
</dbReference>
<dbReference type="FunFam" id="1.10.275.10:FF:000002">
    <property type="entry name" value="Argininosuccinate lyase"/>
    <property type="match status" value="1"/>
</dbReference>
<dbReference type="FunFam" id="1.10.40.30:FF:000001">
    <property type="entry name" value="Argininosuccinate lyase"/>
    <property type="match status" value="1"/>
</dbReference>
<dbReference type="FunFam" id="1.20.200.10:FF:000002">
    <property type="entry name" value="Argininosuccinate lyase"/>
    <property type="match status" value="1"/>
</dbReference>
<dbReference type="Gene3D" id="1.10.40.30">
    <property type="entry name" value="Fumarase/aspartase (C-terminal domain)"/>
    <property type="match status" value="1"/>
</dbReference>
<dbReference type="Gene3D" id="1.20.200.10">
    <property type="entry name" value="Fumarase/aspartase (Central domain)"/>
    <property type="match status" value="1"/>
</dbReference>
<dbReference type="Gene3D" id="1.10.275.10">
    <property type="entry name" value="Fumarase/aspartase (N-terminal domain)"/>
    <property type="match status" value="1"/>
</dbReference>
<dbReference type="HAMAP" id="MF_00006">
    <property type="entry name" value="Arg_succ_lyase"/>
    <property type="match status" value="1"/>
</dbReference>
<dbReference type="InterPro" id="IPR029419">
    <property type="entry name" value="Arg_succ_lyase_C"/>
</dbReference>
<dbReference type="InterPro" id="IPR009049">
    <property type="entry name" value="Argininosuccinate_lyase"/>
</dbReference>
<dbReference type="InterPro" id="IPR024083">
    <property type="entry name" value="Fumarase/histidase_N"/>
</dbReference>
<dbReference type="InterPro" id="IPR020557">
    <property type="entry name" value="Fumarate_lyase_CS"/>
</dbReference>
<dbReference type="InterPro" id="IPR000362">
    <property type="entry name" value="Fumarate_lyase_fam"/>
</dbReference>
<dbReference type="InterPro" id="IPR022761">
    <property type="entry name" value="Fumarate_lyase_N"/>
</dbReference>
<dbReference type="InterPro" id="IPR008948">
    <property type="entry name" value="L-Aspartase-like"/>
</dbReference>
<dbReference type="NCBIfam" id="TIGR00838">
    <property type="entry name" value="argH"/>
    <property type="match status" value="1"/>
</dbReference>
<dbReference type="PANTHER" id="PTHR43814">
    <property type="entry name" value="ARGININOSUCCINATE LYASE"/>
    <property type="match status" value="1"/>
</dbReference>
<dbReference type="PANTHER" id="PTHR43814:SF1">
    <property type="entry name" value="ARGININOSUCCINATE LYASE"/>
    <property type="match status" value="1"/>
</dbReference>
<dbReference type="Pfam" id="PF14698">
    <property type="entry name" value="ASL_C2"/>
    <property type="match status" value="1"/>
</dbReference>
<dbReference type="Pfam" id="PF00206">
    <property type="entry name" value="Lyase_1"/>
    <property type="match status" value="1"/>
</dbReference>
<dbReference type="PRINTS" id="PR00145">
    <property type="entry name" value="ARGSUCLYASE"/>
</dbReference>
<dbReference type="PRINTS" id="PR00149">
    <property type="entry name" value="FUMRATELYASE"/>
</dbReference>
<dbReference type="SUPFAM" id="SSF48557">
    <property type="entry name" value="L-aspartase-like"/>
    <property type="match status" value="1"/>
</dbReference>
<dbReference type="PROSITE" id="PS00163">
    <property type="entry name" value="FUMARATE_LYASES"/>
    <property type="match status" value="1"/>
</dbReference>
<keyword id="KW-0028">Amino-acid biosynthesis</keyword>
<keyword id="KW-0055">Arginine biosynthesis</keyword>
<keyword id="KW-0963">Cytoplasm</keyword>
<keyword id="KW-0456">Lyase</keyword>
<sequence>MAKNTKLWGGRFEGTVEDWVERFGASISFDQKLAKFDVIGSLAHVQMLGQTGILSLEESEKIQVGLKELLEELEAGQLDFDIANEDIHMNMEVLLTEKIGPLAGKLHTARSRNDQVATDMHLYLKEQLGYVLDKLAHLKGVLLDLAENHVATIMPGYTHLQHAQPISFAYHLMAYYNMFQRDSERFEFNQKHTDLCPLGAAALAGTTFPIDRQLSSDLLEFKQPYTNSLDAVSDRDFILEFLSNASILMMHMSRFCEEMINWCSFEYQFITLSDTFTIGSSIMPQKKNPDMAELIRGKTGRVYGHLFGLLTVMKSLPLAYNKDLQEDKEGMFDTVETILNSLDVLAGMLSSLQVNKEKMQESTEKDFSNATELADYLAGKGLPFREAHEVVGRLVLDSIKSAKNLQDWTLEELQTYHSLITEDIYVYLQPKTAVQRRNSLGGTGFDQVEYQIAVAKKANEAKK</sequence>
<evidence type="ECO:0000255" key="1">
    <source>
        <dbReference type="HAMAP-Rule" id="MF_00006"/>
    </source>
</evidence>
<reference key="1">
    <citation type="journal article" date="2010" name="Genome Biol.">
        <title>Structure and dynamics of the pan-genome of Streptococcus pneumoniae and closely related species.</title>
        <authorList>
            <person name="Donati C."/>
            <person name="Hiller N.L."/>
            <person name="Tettelin H."/>
            <person name="Muzzi A."/>
            <person name="Croucher N.J."/>
            <person name="Angiuoli S.V."/>
            <person name="Oggioni M."/>
            <person name="Dunning Hotopp J.C."/>
            <person name="Hu F.Z."/>
            <person name="Riley D.R."/>
            <person name="Covacci A."/>
            <person name="Mitchell T.J."/>
            <person name="Bentley S.D."/>
            <person name="Kilian M."/>
            <person name="Ehrlich G.D."/>
            <person name="Rappuoli R."/>
            <person name="Moxon E.R."/>
            <person name="Masignani V."/>
        </authorList>
    </citation>
    <scope>NUCLEOTIDE SEQUENCE [LARGE SCALE GENOMIC DNA]</scope>
    <source>
        <strain>Hungary19A-6</strain>
    </source>
</reference>
<accession>B1I815</accession>
<organism>
    <name type="scientific">Streptococcus pneumoniae (strain Hungary19A-6)</name>
    <dbReference type="NCBI Taxonomy" id="487214"/>
    <lineage>
        <taxon>Bacteria</taxon>
        <taxon>Bacillati</taxon>
        <taxon>Bacillota</taxon>
        <taxon>Bacilli</taxon>
        <taxon>Lactobacillales</taxon>
        <taxon>Streptococcaceae</taxon>
        <taxon>Streptococcus</taxon>
    </lineage>
</organism>
<feature type="chain" id="PRO_1000089122" description="Argininosuccinate lyase">
    <location>
        <begin position="1"/>
        <end position="463"/>
    </location>
</feature>